<name>CHEY_TREPA</name>
<keyword id="KW-0145">Chemotaxis</keyword>
<keyword id="KW-0963">Cytoplasm</keyword>
<keyword id="KW-0283">Flagellar rotation</keyword>
<keyword id="KW-0460">Magnesium</keyword>
<keyword id="KW-0479">Metal-binding</keyword>
<keyword id="KW-0597">Phosphoprotein</keyword>
<keyword id="KW-1185">Reference proteome</keyword>
<keyword id="KW-0902">Two-component regulatory system</keyword>
<sequence length="144" mass="15736">MISKQDFPTINDRVPAGQKPNGAPYRVLVVDDSMFVSKQIGQILTSEGYEVADTAVDGVDGVEKYKAMSPGVDLVTMDITMPKMDGITALEKILEFDKNAKVVIISALGKEELVKKALLLGAKNYIVKPLDRKKVLERIASVLK</sequence>
<gene>
    <name type="primary">cheY</name>
    <name type="ordered locus">TP_0366</name>
</gene>
<accession>P96126</accession>
<reference key="1">
    <citation type="journal article" date="1997" name="DNA Seq.">
        <title>Identification, sequences, and expression of Treponema pallidum chemotaxis genes.</title>
        <authorList>
            <person name="Greene S.R."/>
            <person name="Stamm L.V."/>
            <person name="Hardham J.M."/>
            <person name="Young N.R."/>
            <person name="Frye J.G."/>
        </authorList>
    </citation>
    <scope>NUCLEOTIDE SEQUENCE [GENOMIC DNA]</scope>
    <source>
        <strain>Nichols</strain>
    </source>
</reference>
<reference key="2">
    <citation type="journal article" date="1998" name="Science">
        <title>Complete genome sequence of Treponema pallidum, the syphilis spirochete.</title>
        <authorList>
            <person name="Fraser C.M."/>
            <person name="Norris S.J."/>
            <person name="Weinstock G.M."/>
            <person name="White O."/>
            <person name="Sutton G.G."/>
            <person name="Dodson R.J."/>
            <person name="Gwinn M.L."/>
            <person name="Hickey E.K."/>
            <person name="Clayton R.A."/>
            <person name="Ketchum K.A."/>
            <person name="Sodergren E."/>
            <person name="Hardham J.M."/>
            <person name="McLeod M.P."/>
            <person name="Salzberg S.L."/>
            <person name="Peterson J.D."/>
            <person name="Khalak H.G."/>
            <person name="Richardson D.L."/>
            <person name="Howell J.K."/>
            <person name="Chidambaram M."/>
            <person name="Utterback T.R."/>
            <person name="McDonald L.A."/>
            <person name="Artiach P."/>
            <person name="Bowman C."/>
            <person name="Cotton M.D."/>
            <person name="Fujii C."/>
            <person name="Garland S.A."/>
            <person name="Hatch B."/>
            <person name="Horst K."/>
            <person name="Roberts K.M."/>
            <person name="Sandusky M."/>
            <person name="Weidman J.F."/>
            <person name="Smith H.O."/>
            <person name="Venter J.C."/>
        </authorList>
    </citation>
    <scope>NUCLEOTIDE SEQUENCE [LARGE SCALE GENOMIC DNA]</scope>
    <source>
        <strain>Nichols</strain>
    </source>
</reference>
<comment type="function">
    <text evidence="2">Involved in the transmission of sensory signals from the chemoreceptors to the flagellar motors. CheY seems to regulate the clockwise (CW) rotation (By similarity).</text>
</comment>
<comment type="cofactor">
    <cofactor evidence="2">
        <name>Mg(2+)</name>
        <dbReference type="ChEBI" id="CHEBI:18420"/>
    </cofactor>
    <text evidence="2">Binds 1 Mg(2+) ion per subunit.</text>
</comment>
<comment type="subcellular location">
    <subcellularLocation>
        <location evidence="5">Cytoplasm</location>
    </subcellularLocation>
</comment>
<comment type="PTM">
    <text evidence="2">Phosphorylated by CheA.</text>
</comment>
<dbReference type="EMBL" id="U61851">
    <property type="protein sequence ID" value="AAC45558.1"/>
    <property type="molecule type" value="Genomic_DNA"/>
</dbReference>
<dbReference type="EMBL" id="AE000520">
    <property type="protein sequence ID" value="AAC65351.1"/>
    <property type="molecule type" value="Genomic_DNA"/>
</dbReference>
<dbReference type="PIR" id="D71335">
    <property type="entry name" value="D71335"/>
</dbReference>
<dbReference type="RefSeq" id="WP_010881814.1">
    <property type="nucleotide sequence ID" value="NC_021490.2"/>
</dbReference>
<dbReference type="SMR" id="P96126"/>
<dbReference type="STRING" id="243276.TP_0366"/>
<dbReference type="EnsemblBacteria" id="AAC65351">
    <property type="protein sequence ID" value="AAC65351"/>
    <property type="gene ID" value="TP_0366"/>
</dbReference>
<dbReference type="KEGG" id="tpa:TP_0366"/>
<dbReference type="KEGG" id="tpw:TPANIC_0366"/>
<dbReference type="eggNOG" id="COG2201">
    <property type="taxonomic scope" value="Bacteria"/>
</dbReference>
<dbReference type="HOGENOM" id="CLU_000445_69_15_12"/>
<dbReference type="OrthoDB" id="9790669at2"/>
<dbReference type="Proteomes" id="UP000000811">
    <property type="component" value="Chromosome"/>
</dbReference>
<dbReference type="GO" id="GO:0005737">
    <property type="term" value="C:cytoplasm"/>
    <property type="evidence" value="ECO:0007669"/>
    <property type="project" value="UniProtKB-SubCell"/>
</dbReference>
<dbReference type="GO" id="GO:0046872">
    <property type="term" value="F:metal ion binding"/>
    <property type="evidence" value="ECO:0007669"/>
    <property type="project" value="UniProtKB-KW"/>
</dbReference>
<dbReference type="GO" id="GO:0097588">
    <property type="term" value="P:archaeal or bacterial-type flagellum-dependent cell motility"/>
    <property type="evidence" value="ECO:0007669"/>
    <property type="project" value="UniProtKB-KW"/>
</dbReference>
<dbReference type="GO" id="GO:0006935">
    <property type="term" value="P:chemotaxis"/>
    <property type="evidence" value="ECO:0007669"/>
    <property type="project" value="UniProtKB-KW"/>
</dbReference>
<dbReference type="GO" id="GO:0000160">
    <property type="term" value="P:phosphorelay signal transduction system"/>
    <property type="evidence" value="ECO:0007669"/>
    <property type="project" value="UniProtKB-KW"/>
</dbReference>
<dbReference type="CDD" id="cd17542">
    <property type="entry name" value="REC_CheY"/>
    <property type="match status" value="1"/>
</dbReference>
<dbReference type="Gene3D" id="3.40.50.2300">
    <property type="match status" value="1"/>
</dbReference>
<dbReference type="InterPro" id="IPR011006">
    <property type="entry name" value="CheY-like_superfamily"/>
</dbReference>
<dbReference type="InterPro" id="IPR001789">
    <property type="entry name" value="Sig_transdc_resp-reg_receiver"/>
</dbReference>
<dbReference type="InterPro" id="IPR052048">
    <property type="entry name" value="ST_Response_Regulator"/>
</dbReference>
<dbReference type="PANTHER" id="PTHR43228">
    <property type="entry name" value="TWO-COMPONENT RESPONSE REGULATOR"/>
    <property type="match status" value="1"/>
</dbReference>
<dbReference type="PANTHER" id="PTHR43228:SF1">
    <property type="entry name" value="TWO-COMPONENT RESPONSE REGULATOR ARR22"/>
    <property type="match status" value="1"/>
</dbReference>
<dbReference type="Pfam" id="PF00072">
    <property type="entry name" value="Response_reg"/>
    <property type="match status" value="1"/>
</dbReference>
<dbReference type="SMART" id="SM00448">
    <property type="entry name" value="REC"/>
    <property type="match status" value="1"/>
</dbReference>
<dbReference type="SUPFAM" id="SSF52172">
    <property type="entry name" value="CheY-like"/>
    <property type="match status" value="1"/>
</dbReference>
<dbReference type="PROSITE" id="PS50110">
    <property type="entry name" value="RESPONSE_REGULATORY"/>
    <property type="match status" value="1"/>
</dbReference>
<feature type="chain" id="PRO_0000081056" description="Chemotaxis protein CheY">
    <location>
        <begin position="1"/>
        <end position="144"/>
    </location>
</feature>
<feature type="domain" description="Response regulatory" evidence="4">
    <location>
        <begin position="26"/>
        <end position="143"/>
    </location>
</feature>
<feature type="binding site" evidence="1">
    <location>
        <position position="31"/>
    </location>
    <ligand>
        <name>Mg(2+)</name>
        <dbReference type="ChEBI" id="CHEBI:18420"/>
    </ligand>
</feature>
<feature type="binding site" evidence="2">
    <location>
        <position position="32"/>
    </location>
    <ligand>
        <name>Mg(2+)</name>
        <dbReference type="ChEBI" id="CHEBI:18420"/>
    </ligand>
</feature>
<feature type="binding site" evidence="2">
    <location>
        <position position="78"/>
    </location>
    <ligand>
        <name>Mg(2+)</name>
        <dbReference type="ChEBI" id="CHEBI:18420"/>
    </ligand>
</feature>
<feature type="binding site" evidence="3">
    <location>
        <position position="80"/>
    </location>
    <ligand>
        <name>Mg(2+)</name>
        <dbReference type="ChEBI" id="CHEBI:18420"/>
    </ligand>
</feature>
<feature type="modified residue" description="4-aspartylphosphate" evidence="4">
    <location>
        <position position="78"/>
    </location>
</feature>
<organism>
    <name type="scientific">Treponema pallidum (strain Nichols)</name>
    <dbReference type="NCBI Taxonomy" id="243276"/>
    <lineage>
        <taxon>Bacteria</taxon>
        <taxon>Pseudomonadati</taxon>
        <taxon>Spirochaetota</taxon>
        <taxon>Spirochaetia</taxon>
        <taxon>Spirochaetales</taxon>
        <taxon>Treponemataceae</taxon>
        <taxon>Treponema</taxon>
    </lineage>
</organism>
<proteinExistence type="inferred from homology"/>
<protein>
    <recommendedName>
        <fullName>Chemotaxis protein CheY</fullName>
    </recommendedName>
</protein>
<evidence type="ECO:0000250" key="1">
    <source>
        <dbReference type="UniProtKB" id="A0A0H3AMJ9"/>
    </source>
</evidence>
<evidence type="ECO:0000250" key="2">
    <source>
        <dbReference type="UniProtKB" id="P0AE67"/>
    </source>
</evidence>
<evidence type="ECO:0000250" key="3">
    <source>
        <dbReference type="UniProtKB" id="Q56312"/>
    </source>
</evidence>
<evidence type="ECO:0000255" key="4">
    <source>
        <dbReference type="PROSITE-ProRule" id="PRU00169"/>
    </source>
</evidence>
<evidence type="ECO:0000305" key="5"/>